<sequence>MASSLLEEEAHYGSSPLAMLTAACSKFGGSSPLRDSTTLGKGGTKKPYADLSAPKTMGDAYPAPFSSTNGLLSPAGSPPAPASGYANDYPPFPHSFPGPTGAQDPGLLVPKGHSSSDCLPSVYTSLDMTHPYGSWYKAGIHAGISPGPGNTPTPWWDMHPGGNWLGGGQGQGDGLQGTLSTGPAQPPLNPQLPTYPSDFAPLNPAPYPAPHLLQPGPQHVLPQDVYKPKAVGNSGQLEGSGAAKPPRGAGTGGSGGYAGSGAGRSTCDCPNCQELERLGAAAAGLRKKPIHSCHIPGCGKVYGKASHLKAHLRWHTGERPFVCNWLFCGKRFTRSDELERHVRTHTREKKFTCLLCSKRFTRSDHLSKHQRTHGEPGPGPPPSGPKELGEGRSVGEEEANQPPRSSTSPAPPEKAHGGSPEQSNLLEI</sequence>
<evidence type="ECO:0000250" key="1">
    <source>
        <dbReference type="UniProtKB" id="Q8TDD2"/>
    </source>
</evidence>
<evidence type="ECO:0000255" key="2">
    <source>
        <dbReference type="PROSITE-ProRule" id="PRU00042"/>
    </source>
</evidence>
<evidence type="ECO:0000256" key="3">
    <source>
        <dbReference type="SAM" id="MobiDB-lite"/>
    </source>
</evidence>
<evidence type="ECO:0000269" key="4">
    <source>
    </source>
</evidence>
<evidence type="ECO:0000269" key="5">
    <source>
    </source>
</evidence>
<evidence type="ECO:0000269" key="6">
    <source>
    </source>
</evidence>
<evidence type="ECO:0000269" key="7">
    <source>
    </source>
</evidence>
<evidence type="ECO:0000305" key="8"/>
<evidence type="ECO:0000305" key="9">
    <source>
    </source>
</evidence>
<reference key="1">
    <citation type="journal article" date="2002" name="Cell">
        <title>The novel zinc finger-containing transcription factor osterix is required for osteoblast differentiation and bone formation.</title>
        <authorList>
            <person name="Nakashima K."/>
            <person name="Zhou X."/>
            <person name="Kunkel G."/>
            <person name="Zhang Z."/>
            <person name="Deng J.M."/>
            <person name="Behringer R.R."/>
            <person name="de Crombrugghe B."/>
        </authorList>
    </citation>
    <scope>NUCLEOTIDE SEQUENCE [MRNA]</scope>
    <scope>FUNCTION</scope>
    <scope>SUBCELLULAR LOCATION</scope>
    <scope>TISSUE SPECIFICITY</scope>
    <scope>DISRUPTION PHENOTYPE</scope>
</reference>
<reference key="2">
    <citation type="journal article" date="2005" name="Science">
        <title>The transcriptional landscape of the mammalian genome.</title>
        <authorList>
            <person name="Carninci P."/>
            <person name="Kasukawa T."/>
            <person name="Katayama S."/>
            <person name="Gough J."/>
            <person name="Frith M.C."/>
            <person name="Maeda N."/>
            <person name="Oyama R."/>
            <person name="Ravasi T."/>
            <person name="Lenhard B."/>
            <person name="Wells C."/>
            <person name="Kodzius R."/>
            <person name="Shimokawa K."/>
            <person name="Bajic V.B."/>
            <person name="Brenner S.E."/>
            <person name="Batalov S."/>
            <person name="Forrest A.R."/>
            <person name="Zavolan M."/>
            <person name="Davis M.J."/>
            <person name="Wilming L.G."/>
            <person name="Aidinis V."/>
            <person name="Allen J.E."/>
            <person name="Ambesi-Impiombato A."/>
            <person name="Apweiler R."/>
            <person name="Aturaliya R.N."/>
            <person name="Bailey T.L."/>
            <person name="Bansal M."/>
            <person name="Baxter L."/>
            <person name="Beisel K.W."/>
            <person name="Bersano T."/>
            <person name="Bono H."/>
            <person name="Chalk A.M."/>
            <person name="Chiu K.P."/>
            <person name="Choudhary V."/>
            <person name="Christoffels A."/>
            <person name="Clutterbuck D.R."/>
            <person name="Crowe M.L."/>
            <person name="Dalla E."/>
            <person name="Dalrymple B.P."/>
            <person name="de Bono B."/>
            <person name="Della Gatta G."/>
            <person name="di Bernardo D."/>
            <person name="Down T."/>
            <person name="Engstrom P."/>
            <person name="Fagiolini M."/>
            <person name="Faulkner G."/>
            <person name="Fletcher C.F."/>
            <person name="Fukushima T."/>
            <person name="Furuno M."/>
            <person name="Futaki S."/>
            <person name="Gariboldi M."/>
            <person name="Georgii-Hemming P."/>
            <person name="Gingeras T.R."/>
            <person name="Gojobori T."/>
            <person name="Green R.E."/>
            <person name="Gustincich S."/>
            <person name="Harbers M."/>
            <person name="Hayashi Y."/>
            <person name="Hensch T.K."/>
            <person name="Hirokawa N."/>
            <person name="Hill D."/>
            <person name="Huminiecki L."/>
            <person name="Iacono M."/>
            <person name="Ikeo K."/>
            <person name="Iwama A."/>
            <person name="Ishikawa T."/>
            <person name="Jakt M."/>
            <person name="Kanapin A."/>
            <person name="Katoh M."/>
            <person name="Kawasawa Y."/>
            <person name="Kelso J."/>
            <person name="Kitamura H."/>
            <person name="Kitano H."/>
            <person name="Kollias G."/>
            <person name="Krishnan S.P."/>
            <person name="Kruger A."/>
            <person name="Kummerfeld S.K."/>
            <person name="Kurochkin I.V."/>
            <person name="Lareau L.F."/>
            <person name="Lazarevic D."/>
            <person name="Lipovich L."/>
            <person name="Liu J."/>
            <person name="Liuni S."/>
            <person name="McWilliam S."/>
            <person name="Madan Babu M."/>
            <person name="Madera M."/>
            <person name="Marchionni L."/>
            <person name="Matsuda H."/>
            <person name="Matsuzawa S."/>
            <person name="Miki H."/>
            <person name="Mignone F."/>
            <person name="Miyake S."/>
            <person name="Morris K."/>
            <person name="Mottagui-Tabar S."/>
            <person name="Mulder N."/>
            <person name="Nakano N."/>
            <person name="Nakauchi H."/>
            <person name="Ng P."/>
            <person name="Nilsson R."/>
            <person name="Nishiguchi S."/>
            <person name="Nishikawa S."/>
            <person name="Nori F."/>
            <person name="Ohara O."/>
            <person name="Okazaki Y."/>
            <person name="Orlando V."/>
            <person name="Pang K.C."/>
            <person name="Pavan W.J."/>
            <person name="Pavesi G."/>
            <person name="Pesole G."/>
            <person name="Petrovsky N."/>
            <person name="Piazza S."/>
            <person name="Reed J."/>
            <person name="Reid J.F."/>
            <person name="Ring B.Z."/>
            <person name="Ringwald M."/>
            <person name="Rost B."/>
            <person name="Ruan Y."/>
            <person name="Salzberg S.L."/>
            <person name="Sandelin A."/>
            <person name="Schneider C."/>
            <person name="Schoenbach C."/>
            <person name="Sekiguchi K."/>
            <person name="Semple C.A."/>
            <person name="Seno S."/>
            <person name="Sessa L."/>
            <person name="Sheng Y."/>
            <person name="Shibata Y."/>
            <person name="Shimada H."/>
            <person name="Shimada K."/>
            <person name="Silva D."/>
            <person name="Sinclair B."/>
            <person name="Sperling S."/>
            <person name="Stupka E."/>
            <person name="Sugiura K."/>
            <person name="Sultana R."/>
            <person name="Takenaka Y."/>
            <person name="Taki K."/>
            <person name="Tammoja K."/>
            <person name="Tan S.L."/>
            <person name="Tang S."/>
            <person name="Taylor M.S."/>
            <person name="Tegner J."/>
            <person name="Teichmann S.A."/>
            <person name="Ueda H.R."/>
            <person name="van Nimwegen E."/>
            <person name="Verardo R."/>
            <person name="Wei C.L."/>
            <person name="Yagi K."/>
            <person name="Yamanishi H."/>
            <person name="Zabarovsky E."/>
            <person name="Zhu S."/>
            <person name="Zimmer A."/>
            <person name="Hide W."/>
            <person name="Bult C."/>
            <person name="Grimmond S.M."/>
            <person name="Teasdale R.D."/>
            <person name="Liu E.T."/>
            <person name="Brusic V."/>
            <person name="Quackenbush J."/>
            <person name="Wahlestedt C."/>
            <person name="Mattick J.S."/>
            <person name="Hume D.A."/>
            <person name="Kai C."/>
            <person name="Sasaki D."/>
            <person name="Tomaru Y."/>
            <person name="Fukuda S."/>
            <person name="Kanamori-Katayama M."/>
            <person name="Suzuki M."/>
            <person name="Aoki J."/>
            <person name="Arakawa T."/>
            <person name="Iida J."/>
            <person name="Imamura K."/>
            <person name="Itoh M."/>
            <person name="Kato T."/>
            <person name="Kawaji H."/>
            <person name="Kawagashira N."/>
            <person name="Kawashima T."/>
            <person name="Kojima M."/>
            <person name="Kondo S."/>
            <person name="Konno H."/>
            <person name="Nakano K."/>
            <person name="Ninomiya N."/>
            <person name="Nishio T."/>
            <person name="Okada M."/>
            <person name="Plessy C."/>
            <person name="Shibata K."/>
            <person name="Shiraki T."/>
            <person name="Suzuki S."/>
            <person name="Tagami M."/>
            <person name="Waki K."/>
            <person name="Watahiki A."/>
            <person name="Okamura-Oho Y."/>
            <person name="Suzuki H."/>
            <person name="Kawai J."/>
            <person name="Hayashizaki Y."/>
        </authorList>
    </citation>
    <scope>NUCLEOTIDE SEQUENCE [LARGE SCALE MRNA]</scope>
    <source>
        <strain>C57BL/6J</strain>
        <tissue>Head</tissue>
        <tissue>Olfactory neuron</tissue>
    </source>
</reference>
<reference key="3">
    <citation type="journal article" date="2007" name="J. Biol. Chem.">
        <title>Nuclear factor-E2-related factor-1 mediates ascorbic acid induction of osterix expression via interaction with antioxidant-responsive element in bone cells.</title>
        <authorList>
            <person name="Xing W."/>
            <person name="Singgih A."/>
            <person name="Kapoor A."/>
            <person name="Alarcon C.M."/>
            <person name="Baylink D.J."/>
            <person name="Mohan S."/>
        </authorList>
    </citation>
    <scope>FUNCTION</scope>
    <scope>INDUCTION</scope>
</reference>
<reference key="4">
    <citation type="journal article" date="2010" name="EMBO J.">
        <title>Regulation of the osteoblast-specific transcription factor Osterix by NO66, a Jumonji family histone demethylase.</title>
        <authorList>
            <person name="Sinha K.M."/>
            <person name="Yasuda H."/>
            <person name="Coombes M.M."/>
            <person name="Dent S.Y."/>
            <person name="de Crombrugghe B."/>
        </authorList>
    </citation>
    <scope>INTERACTION WITH RIOX1</scope>
</reference>
<reference key="5">
    <citation type="journal article" date="2018" name="Nat. Commun.">
        <title>SIRT7 has a critical role in bone formation by regulating lysine acylation of SP7/Osterix.</title>
        <authorList>
            <person name="Fukuda M."/>
            <person name="Yoshizawa T."/>
            <person name="Karim M.F."/>
            <person name="Sobuz S.U."/>
            <person name="Korogi W."/>
            <person name="Kobayasi D."/>
            <person name="Okanishi H."/>
            <person name="Tasaki M."/>
            <person name="Ono K."/>
            <person name="Sawa T."/>
            <person name="Sato Y."/>
            <person name="Chirifu M."/>
            <person name="Masuda T."/>
            <person name="Nakamura T."/>
            <person name="Tanoue H."/>
            <person name="Nakashima K."/>
            <person name="Kobashigawa Y."/>
            <person name="Morioka H."/>
            <person name="Bober E."/>
            <person name="Ohtsuki S."/>
            <person name="Yamagata Y."/>
            <person name="Ando Y."/>
            <person name="Oike Y."/>
            <person name="Araki N."/>
            <person name="Takeda S."/>
            <person name="Mizuta H."/>
            <person name="Yamagata K."/>
        </authorList>
    </citation>
    <scope>FUNCTION</scope>
    <scope>PROPIONYLATION AT LYS-41; LYS-45; LYS-358 AND LYS-368</scope>
    <scope>DEPROPIONYLATION BY SIRT7</scope>
    <scope>MUTAGENESIS OF 41-LYS--LYS-46 AND LYS-368</scope>
</reference>
<dbReference type="EMBL" id="AF184902">
    <property type="protein sequence ID" value="AAL60067.1"/>
    <property type="molecule type" value="mRNA"/>
</dbReference>
<dbReference type="EMBL" id="AK032521">
    <property type="protein sequence ID" value="BAC27908.1"/>
    <property type="molecule type" value="mRNA"/>
</dbReference>
<dbReference type="EMBL" id="AK076229">
    <property type="protein sequence ID" value="BAC36263.1"/>
    <property type="molecule type" value="mRNA"/>
</dbReference>
<dbReference type="EMBL" id="AK077375">
    <property type="protein sequence ID" value="BAC36774.1"/>
    <property type="molecule type" value="mRNA"/>
</dbReference>
<dbReference type="CCDS" id="CCDS37228.1"/>
<dbReference type="RefSeq" id="NP_001335134.1">
    <property type="nucleotide sequence ID" value="NM_001348205.1"/>
</dbReference>
<dbReference type="RefSeq" id="NP_569725.1">
    <property type="nucleotide sequence ID" value="NM_130458.4"/>
</dbReference>
<dbReference type="RefSeq" id="XP_006520582.1">
    <property type="nucleotide sequence ID" value="XM_006520519.5"/>
</dbReference>
<dbReference type="SMR" id="Q8VI67"/>
<dbReference type="BioGRID" id="228354">
    <property type="interactions" value="7"/>
</dbReference>
<dbReference type="DIP" id="DIP-46090N"/>
<dbReference type="FunCoup" id="Q8VI67">
    <property type="interactions" value="1258"/>
</dbReference>
<dbReference type="IntAct" id="Q8VI67">
    <property type="interactions" value="12"/>
</dbReference>
<dbReference type="MINT" id="Q8VI67"/>
<dbReference type="STRING" id="10090.ENSMUSP00000077596"/>
<dbReference type="GlyGen" id="Q8VI67">
    <property type="glycosylation" value="3 sites, 1 O-linked glycan (1 site)"/>
</dbReference>
<dbReference type="iPTMnet" id="Q8VI67"/>
<dbReference type="PhosphoSitePlus" id="Q8VI67"/>
<dbReference type="PaxDb" id="10090-ENSMUSP00000077596"/>
<dbReference type="ProteomicsDB" id="257291"/>
<dbReference type="Antibodypedia" id="3133">
    <property type="antibodies" value="177 antibodies from 33 providers"/>
</dbReference>
<dbReference type="DNASU" id="170574"/>
<dbReference type="Ensembl" id="ENSMUST00000078508.7">
    <property type="protein sequence ID" value="ENSMUSP00000077596.6"/>
    <property type="gene ID" value="ENSMUSG00000060284.8"/>
</dbReference>
<dbReference type="GeneID" id="170574"/>
<dbReference type="KEGG" id="mmu:170574"/>
<dbReference type="UCSC" id="uc007xvm.1">
    <property type="organism name" value="mouse"/>
</dbReference>
<dbReference type="AGR" id="MGI:2153568"/>
<dbReference type="CTD" id="121340"/>
<dbReference type="MGI" id="MGI:2153568">
    <property type="gene designation" value="Sp7"/>
</dbReference>
<dbReference type="VEuPathDB" id="HostDB:ENSMUSG00000060284"/>
<dbReference type="eggNOG" id="KOG1721">
    <property type="taxonomic scope" value="Eukaryota"/>
</dbReference>
<dbReference type="GeneTree" id="ENSGT00940000161293"/>
<dbReference type="HOGENOM" id="CLU_019484_4_2_1"/>
<dbReference type="InParanoid" id="Q8VI67"/>
<dbReference type="OMA" id="PSPWWDM"/>
<dbReference type="OrthoDB" id="6365676at2759"/>
<dbReference type="PhylomeDB" id="Q8VI67"/>
<dbReference type="TreeFam" id="TF350150"/>
<dbReference type="BioGRID-ORCS" id="170574">
    <property type="hits" value="2 hits in 77 CRISPR screens"/>
</dbReference>
<dbReference type="PRO" id="PR:Q8VI67"/>
<dbReference type="Proteomes" id="UP000000589">
    <property type="component" value="Chromosome 15"/>
</dbReference>
<dbReference type="RNAct" id="Q8VI67">
    <property type="molecule type" value="protein"/>
</dbReference>
<dbReference type="Bgee" id="ENSMUSG00000060284">
    <property type="expression patterns" value="Expressed in dental pulp and 100 other cell types or tissues"/>
</dbReference>
<dbReference type="ExpressionAtlas" id="Q8VI67">
    <property type="expression patterns" value="baseline and differential"/>
</dbReference>
<dbReference type="GO" id="GO:0005737">
    <property type="term" value="C:cytoplasm"/>
    <property type="evidence" value="ECO:0000314"/>
    <property type="project" value="MGI"/>
</dbReference>
<dbReference type="GO" id="GO:0005654">
    <property type="term" value="C:nucleoplasm"/>
    <property type="evidence" value="ECO:0000304"/>
    <property type="project" value="Reactome"/>
</dbReference>
<dbReference type="GO" id="GO:0005634">
    <property type="term" value="C:nucleus"/>
    <property type="evidence" value="ECO:0000314"/>
    <property type="project" value="MGI"/>
</dbReference>
<dbReference type="GO" id="GO:0017151">
    <property type="term" value="F:DEAD/H-box RNA helicase binding"/>
    <property type="evidence" value="ECO:0000353"/>
    <property type="project" value="BHF-UCL"/>
</dbReference>
<dbReference type="GO" id="GO:0003677">
    <property type="term" value="F:DNA binding"/>
    <property type="evidence" value="ECO:0000314"/>
    <property type="project" value="MGI"/>
</dbReference>
<dbReference type="GO" id="GO:0001228">
    <property type="term" value="F:DNA-binding transcription activator activity, RNA polymerase II-specific"/>
    <property type="evidence" value="ECO:0000314"/>
    <property type="project" value="UniProtKB"/>
</dbReference>
<dbReference type="GO" id="GO:0000978">
    <property type="term" value="F:RNA polymerase II cis-regulatory region sequence-specific DNA binding"/>
    <property type="evidence" value="ECO:0000314"/>
    <property type="project" value="NTNU_SB"/>
</dbReference>
<dbReference type="GO" id="GO:0008270">
    <property type="term" value="F:zinc ion binding"/>
    <property type="evidence" value="ECO:0007669"/>
    <property type="project" value="UniProtKB-KW"/>
</dbReference>
<dbReference type="GO" id="GO:0034224">
    <property type="term" value="P:cellular response to zinc ion starvation"/>
    <property type="evidence" value="ECO:0007669"/>
    <property type="project" value="Ensembl"/>
</dbReference>
<dbReference type="GO" id="GO:0071529">
    <property type="term" value="P:cementum mineralization"/>
    <property type="evidence" value="ECO:0000314"/>
    <property type="project" value="MGI"/>
</dbReference>
<dbReference type="GO" id="GO:0071344">
    <property type="term" value="P:diphosphate metabolic process"/>
    <property type="evidence" value="ECO:0000315"/>
    <property type="project" value="MGI"/>
</dbReference>
<dbReference type="GO" id="GO:0010467">
    <property type="term" value="P:gene expression"/>
    <property type="evidence" value="ECO:0000314"/>
    <property type="project" value="MGI"/>
</dbReference>
<dbReference type="GO" id="GO:0060218">
    <property type="term" value="P:hematopoietic stem cell differentiation"/>
    <property type="evidence" value="ECO:0007669"/>
    <property type="project" value="Ensembl"/>
</dbReference>
<dbReference type="GO" id="GO:0001649">
    <property type="term" value="P:osteoblast differentiation"/>
    <property type="evidence" value="ECO:0000315"/>
    <property type="project" value="MGI"/>
</dbReference>
<dbReference type="GO" id="GO:2000738">
    <property type="term" value="P:positive regulation of stem cell differentiation"/>
    <property type="evidence" value="ECO:0007669"/>
    <property type="project" value="Ensembl"/>
</dbReference>
<dbReference type="GO" id="GO:0045944">
    <property type="term" value="P:positive regulation of transcription by RNA polymerase II"/>
    <property type="evidence" value="ECO:0000314"/>
    <property type="project" value="UniProtKB"/>
</dbReference>
<dbReference type="GO" id="GO:0006357">
    <property type="term" value="P:regulation of transcription by RNA polymerase II"/>
    <property type="evidence" value="ECO:0000314"/>
    <property type="project" value="MGI"/>
</dbReference>
<dbReference type="GO" id="GO:0032868">
    <property type="term" value="P:response to insulin"/>
    <property type="evidence" value="ECO:0007669"/>
    <property type="project" value="Ensembl"/>
</dbReference>
<dbReference type="FunFam" id="3.30.160.60:FF:000077">
    <property type="entry name" value="Sp8 transcription factor"/>
    <property type="match status" value="1"/>
</dbReference>
<dbReference type="FunFam" id="3.30.160.60:FF:000014">
    <property type="entry name" value="Transcription factor Sp3"/>
    <property type="match status" value="1"/>
</dbReference>
<dbReference type="FunFam" id="3.30.160.60:FF:000100">
    <property type="entry name" value="Zinc finger 45-like"/>
    <property type="match status" value="1"/>
</dbReference>
<dbReference type="Gene3D" id="3.30.160.60">
    <property type="entry name" value="Classic Zinc Finger"/>
    <property type="match status" value="3"/>
</dbReference>
<dbReference type="InterPro" id="IPR036236">
    <property type="entry name" value="Znf_C2H2_sf"/>
</dbReference>
<dbReference type="InterPro" id="IPR013087">
    <property type="entry name" value="Znf_C2H2_type"/>
</dbReference>
<dbReference type="PANTHER" id="PTHR23235">
    <property type="entry name" value="KRUEPPEL-LIKE TRANSCRIPTION FACTOR"/>
    <property type="match status" value="1"/>
</dbReference>
<dbReference type="PANTHER" id="PTHR23235:SF19">
    <property type="entry name" value="TRANSCRIPTION FACTOR SP7"/>
    <property type="match status" value="1"/>
</dbReference>
<dbReference type="Pfam" id="PF00096">
    <property type="entry name" value="zf-C2H2"/>
    <property type="match status" value="3"/>
</dbReference>
<dbReference type="SMART" id="SM00355">
    <property type="entry name" value="ZnF_C2H2"/>
    <property type="match status" value="3"/>
</dbReference>
<dbReference type="SUPFAM" id="SSF57667">
    <property type="entry name" value="beta-beta-alpha zinc fingers"/>
    <property type="match status" value="2"/>
</dbReference>
<dbReference type="PROSITE" id="PS00028">
    <property type="entry name" value="ZINC_FINGER_C2H2_1"/>
    <property type="match status" value="3"/>
</dbReference>
<dbReference type="PROSITE" id="PS50157">
    <property type="entry name" value="ZINC_FINGER_C2H2_2"/>
    <property type="match status" value="3"/>
</dbReference>
<protein>
    <recommendedName>
        <fullName>Transcription factor Sp7</fullName>
    </recommendedName>
    <alternativeName>
        <fullName>C22</fullName>
    </alternativeName>
    <alternativeName>
        <fullName>Zinc finger protein osterix</fullName>
    </alternativeName>
</protein>
<accession>Q8VI67</accession>
<accession>Q8C5R3</accession>
<accession>Q8C6A7</accession>
<keyword id="KW-0010">Activator</keyword>
<keyword id="KW-0238">DNA-binding</keyword>
<keyword id="KW-1017">Isopeptide bond</keyword>
<keyword id="KW-0479">Metal-binding</keyword>
<keyword id="KW-0539">Nucleus</keyword>
<keyword id="KW-1185">Reference proteome</keyword>
<keyword id="KW-0677">Repeat</keyword>
<keyword id="KW-0804">Transcription</keyword>
<keyword id="KW-0805">Transcription regulation</keyword>
<keyword id="KW-0832">Ubl conjugation</keyword>
<keyword id="KW-0862">Zinc</keyword>
<keyword id="KW-0863">Zinc-finger</keyword>
<comment type="function">
    <text evidence="4 5 7">Transcriptional activator essential for osteoblast differentiation (PubMed:11792318, PubMed:17510056, PubMed:30026585). Binds to SP1 and EKLF consensus sequences and to other G/C-rich sequences (PubMed:11792318, PubMed:17510056).</text>
</comment>
<comment type="subunit">
    <text evidence="6">Interacts with RIOX1; the interaction is direct and inhibits transcription activator activity.</text>
</comment>
<comment type="interaction">
    <interactant intactId="EBI-7608836">
        <id>Q8VI67</id>
    </interactant>
    <interactant intactId="EBI-7608809">
        <id>Q9JJF3</id>
        <label>Riox1</label>
    </interactant>
    <organismsDiffer>false</organismsDiffer>
    <experiments>3</experiments>
</comment>
<comment type="interaction">
    <interactant intactId="EBI-7608836">
        <id>Q8VI67</id>
    </interactant>
    <interactant intactId="EBI-2513645">
        <id>Q9H6W3</id>
        <label>RIOX1</label>
    </interactant>
    <organismsDiffer>true</organismsDiffer>
    <experiments>6</experiments>
</comment>
<comment type="subcellular location">
    <subcellularLocation>
        <location evidence="4">Nucleus</location>
    </subcellularLocation>
</comment>
<comment type="tissue specificity">
    <text evidence="4">Osteoblast/chondrocyte specific.</text>
</comment>
<comment type="induction">
    <text evidence="5">In response to ascorbic acid induction, expression is activated by NFE2L1 in osteoblasts.</text>
</comment>
<comment type="domain">
    <text evidence="1">The 9aaTAD motif is a transactivation domain present in a large number of yeast and animal transcription factors.</text>
</comment>
<comment type="PTM">
    <text evidence="7">Propionylated (PubMed:30026585). Depropionylation at Lys-368 by SIRT7 activates transcription factor activity and positively regulates bone formation by osteoblasts (PubMed:30026585).</text>
</comment>
<comment type="PTM">
    <text evidence="1">Ubiquitination at leads to proteasomal degradation. SP7 is a short-live protein with an endogenous half-life of approximately 12 hours (By similarity).</text>
</comment>
<comment type="disruption phenotype">
    <text evidence="4">Death in the immediate postnatal period due to difficulty in breathing. Mice rapidly become cyanotic and die within 15 min of birth. New-born homozygous show severe inward bending of forelimbs and hindlimbs. They develop a normal cartilage skeleton but fail to form bone and to express osteoblast-specific marker genes. In endochondral skeletal elements, mesenchymal cells together with osteoclasts and blood vessels, invade the mineralized cartilage matrix.</text>
</comment>
<comment type="similarity">
    <text evidence="8">Belongs to the Sp1 C2H2-type zinc-finger protein family.</text>
</comment>
<organism>
    <name type="scientific">Mus musculus</name>
    <name type="common">Mouse</name>
    <dbReference type="NCBI Taxonomy" id="10090"/>
    <lineage>
        <taxon>Eukaryota</taxon>
        <taxon>Metazoa</taxon>
        <taxon>Chordata</taxon>
        <taxon>Craniata</taxon>
        <taxon>Vertebrata</taxon>
        <taxon>Euteleostomi</taxon>
        <taxon>Mammalia</taxon>
        <taxon>Eutheria</taxon>
        <taxon>Euarchontoglires</taxon>
        <taxon>Glires</taxon>
        <taxon>Rodentia</taxon>
        <taxon>Myomorpha</taxon>
        <taxon>Muroidea</taxon>
        <taxon>Muridae</taxon>
        <taxon>Murinae</taxon>
        <taxon>Mus</taxon>
        <taxon>Mus</taxon>
    </lineage>
</organism>
<proteinExistence type="evidence at protein level"/>
<gene>
    <name type="primary">Sp7</name>
    <name type="synonym">Osx</name>
</gene>
<feature type="chain" id="PRO_0000047151" description="Transcription factor Sp7">
    <location>
        <begin position="1"/>
        <end position="428"/>
    </location>
</feature>
<feature type="zinc finger region" description="C2H2-type 1" evidence="2">
    <location>
        <begin position="291"/>
        <end position="315"/>
    </location>
</feature>
<feature type="zinc finger region" description="C2H2-type 2" evidence="2">
    <location>
        <begin position="321"/>
        <end position="345"/>
    </location>
</feature>
<feature type="zinc finger region" description="C2H2-type 3" evidence="2">
    <location>
        <begin position="351"/>
        <end position="373"/>
    </location>
</feature>
<feature type="region of interest" description="Disordered" evidence="3">
    <location>
        <begin position="30"/>
        <end position="84"/>
    </location>
</feature>
<feature type="region of interest" description="Disordered" evidence="3">
    <location>
        <begin position="229"/>
        <end position="257"/>
    </location>
</feature>
<feature type="region of interest" description="Disordered" evidence="3">
    <location>
        <begin position="364"/>
        <end position="428"/>
    </location>
</feature>
<feature type="short sequence motif" description="9aaTAD" evidence="1">
    <location>
        <begin position="153"/>
        <end position="161"/>
    </location>
</feature>
<feature type="modified residue" description="N6-propionyllysine" evidence="9">
    <location>
        <position position="41"/>
    </location>
</feature>
<feature type="modified residue" description="N6-propionyllysine" evidence="9">
    <location>
        <position position="45"/>
    </location>
</feature>
<feature type="modified residue" description="N6-propionyllysine" evidence="9">
    <location>
        <position position="358"/>
    </location>
</feature>
<feature type="modified residue" description="N6-propionyllysine" evidence="7">
    <location>
        <position position="368"/>
    </location>
</feature>
<feature type="cross-link" description="Glycyl lysine isopeptide (Lys-Gly) (interchain with G-Cter in ubiquitin)" evidence="1">
    <location>
        <position position="55"/>
    </location>
</feature>
<feature type="cross-link" description="Glycyl lysine isopeptide (Lys-Gly) (interchain with G-Cter in ubiquitin)" evidence="1">
    <location>
        <position position="227"/>
    </location>
</feature>
<feature type="mutagenesis site" description="Decreased propionylation." evidence="7">
    <original>KGGTKK</original>
    <variation>RGGTRR</variation>
    <location>
        <begin position="41"/>
        <end position="46"/>
    </location>
</feature>
<feature type="mutagenesis site" description="Decreased propionylation, leading to increased transcription activator activity." evidence="7">
    <original>K</original>
    <variation>R</variation>
    <location>
        <position position="368"/>
    </location>
</feature>
<feature type="sequence conflict" description="In Ref. 2; BAC36263." evidence="8" ref="2">
    <original>P</original>
    <variation>L</variation>
    <location>
        <position position="64"/>
    </location>
</feature>
<feature type="sequence conflict" description="In Ref. 2; BAC36774." evidence="8" ref="2">
    <original>H</original>
    <variation>Y</variation>
    <location>
        <position position="130"/>
    </location>
</feature>
<name>SP7_MOUSE</name>